<proteinExistence type="inferred from homology"/>
<name>TRUB_STRCO</name>
<dbReference type="EC" id="5.4.99.25" evidence="1"/>
<dbReference type="EMBL" id="AL939124">
    <property type="protein sequence ID" value="CAB37474.1"/>
    <property type="molecule type" value="Genomic_DNA"/>
</dbReference>
<dbReference type="PIR" id="T35986">
    <property type="entry name" value="T35986"/>
</dbReference>
<dbReference type="RefSeq" id="NP_629836.1">
    <property type="nucleotide sequence ID" value="NC_003888.3"/>
</dbReference>
<dbReference type="RefSeq" id="WP_011030403.1">
    <property type="nucleotide sequence ID" value="NZ_VNID01000024.1"/>
</dbReference>
<dbReference type="SMR" id="Q9Z528"/>
<dbReference type="FunCoup" id="Q9Z528">
    <property type="interactions" value="200"/>
</dbReference>
<dbReference type="STRING" id="100226.gene:17763365"/>
<dbReference type="PaxDb" id="100226-SCO5709"/>
<dbReference type="KEGG" id="sco:SCO5709"/>
<dbReference type="PATRIC" id="fig|100226.15.peg.5798"/>
<dbReference type="eggNOG" id="COG0130">
    <property type="taxonomic scope" value="Bacteria"/>
</dbReference>
<dbReference type="HOGENOM" id="CLU_032087_0_0_11"/>
<dbReference type="InParanoid" id="Q9Z528"/>
<dbReference type="OrthoDB" id="9802309at2"/>
<dbReference type="PhylomeDB" id="Q9Z528"/>
<dbReference type="Proteomes" id="UP000001973">
    <property type="component" value="Chromosome"/>
</dbReference>
<dbReference type="GO" id="GO:0009982">
    <property type="term" value="F:pseudouridine synthase activity"/>
    <property type="evidence" value="ECO:0000318"/>
    <property type="project" value="GO_Central"/>
</dbReference>
<dbReference type="GO" id="GO:0003723">
    <property type="term" value="F:RNA binding"/>
    <property type="evidence" value="ECO:0007669"/>
    <property type="project" value="InterPro"/>
</dbReference>
<dbReference type="GO" id="GO:0160148">
    <property type="term" value="F:tRNA pseudouridine(55) synthase activity"/>
    <property type="evidence" value="ECO:0007669"/>
    <property type="project" value="UniProtKB-EC"/>
</dbReference>
<dbReference type="GO" id="GO:1990481">
    <property type="term" value="P:mRNA pseudouridine synthesis"/>
    <property type="evidence" value="ECO:0000318"/>
    <property type="project" value="GO_Central"/>
</dbReference>
<dbReference type="GO" id="GO:0006400">
    <property type="term" value="P:tRNA modification"/>
    <property type="evidence" value="ECO:0000318"/>
    <property type="project" value="GO_Central"/>
</dbReference>
<dbReference type="GO" id="GO:0031119">
    <property type="term" value="P:tRNA pseudouridine synthesis"/>
    <property type="evidence" value="ECO:0007669"/>
    <property type="project" value="UniProtKB-UniRule"/>
</dbReference>
<dbReference type="CDD" id="cd02573">
    <property type="entry name" value="PseudoU_synth_EcTruB"/>
    <property type="match status" value="1"/>
</dbReference>
<dbReference type="FunFam" id="3.30.2350.10:FF:000011">
    <property type="entry name" value="tRNA pseudouridine synthase B"/>
    <property type="match status" value="1"/>
</dbReference>
<dbReference type="Gene3D" id="3.30.2350.10">
    <property type="entry name" value="Pseudouridine synthase"/>
    <property type="match status" value="1"/>
</dbReference>
<dbReference type="Gene3D" id="2.30.130.10">
    <property type="entry name" value="PUA domain"/>
    <property type="match status" value="1"/>
</dbReference>
<dbReference type="HAMAP" id="MF_01080">
    <property type="entry name" value="TruB_bact"/>
    <property type="match status" value="1"/>
</dbReference>
<dbReference type="InterPro" id="IPR020103">
    <property type="entry name" value="PsdUridine_synth_cat_dom_sf"/>
</dbReference>
<dbReference type="InterPro" id="IPR002501">
    <property type="entry name" value="PsdUridine_synth_N"/>
</dbReference>
<dbReference type="InterPro" id="IPR015947">
    <property type="entry name" value="PUA-like_sf"/>
</dbReference>
<dbReference type="InterPro" id="IPR036974">
    <property type="entry name" value="PUA_sf"/>
</dbReference>
<dbReference type="InterPro" id="IPR015225">
    <property type="entry name" value="tRNA_psdUridine_synth_fam2_C"/>
</dbReference>
<dbReference type="InterPro" id="IPR014780">
    <property type="entry name" value="tRNA_psdUridine_synth_TruB"/>
</dbReference>
<dbReference type="InterPro" id="IPR032819">
    <property type="entry name" value="TruB_C"/>
</dbReference>
<dbReference type="NCBIfam" id="TIGR00431">
    <property type="entry name" value="TruB"/>
    <property type="match status" value="1"/>
</dbReference>
<dbReference type="PANTHER" id="PTHR13767:SF2">
    <property type="entry name" value="PSEUDOURIDYLATE SYNTHASE TRUB1"/>
    <property type="match status" value="1"/>
</dbReference>
<dbReference type="PANTHER" id="PTHR13767">
    <property type="entry name" value="TRNA-PSEUDOURIDINE SYNTHASE"/>
    <property type="match status" value="1"/>
</dbReference>
<dbReference type="Pfam" id="PF09142">
    <property type="entry name" value="TruB_C"/>
    <property type="match status" value="1"/>
</dbReference>
<dbReference type="Pfam" id="PF16198">
    <property type="entry name" value="TruB_C_2"/>
    <property type="match status" value="1"/>
</dbReference>
<dbReference type="Pfam" id="PF01509">
    <property type="entry name" value="TruB_N"/>
    <property type="match status" value="1"/>
</dbReference>
<dbReference type="SUPFAM" id="SSF55120">
    <property type="entry name" value="Pseudouridine synthase"/>
    <property type="match status" value="1"/>
</dbReference>
<dbReference type="SUPFAM" id="SSF88697">
    <property type="entry name" value="PUA domain-like"/>
    <property type="match status" value="1"/>
</dbReference>
<evidence type="ECO:0000255" key="1">
    <source>
        <dbReference type="HAMAP-Rule" id="MF_01080"/>
    </source>
</evidence>
<comment type="function">
    <text evidence="1">Responsible for synthesis of pseudouridine from uracil-55 in the psi GC loop of transfer RNAs.</text>
</comment>
<comment type="catalytic activity">
    <reaction evidence="1">
        <text>uridine(55) in tRNA = pseudouridine(55) in tRNA</text>
        <dbReference type="Rhea" id="RHEA:42532"/>
        <dbReference type="Rhea" id="RHEA-COMP:10101"/>
        <dbReference type="Rhea" id="RHEA-COMP:10102"/>
        <dbReference type="ChEBI" id="CHEBI:65314"/>
        <dbReference type="ChEBI" id="CHEBI:65315"/>
        <dbReference type="EC" id="5.4.99.25"/>
    </reaction>
</comment>
<comment type="similarity">
    <text evidence="1">Belongs to the pseudouridine synthase TruB family. Type 1 subfamily.</text>
</comment>
<keyword id="KW-0413">Isomerase</keyword>
<keyword id="KW-1185">Reference proteome</keyword>
<keyword id="KW-0819">tRNA processing</keyword>
<protein>
    <recommendedName>
        <fullName evidence="1">tRNA pseudouridine synthase B</fullName>
        <ecNumber evidence="1">5.4.99.25</ecNumber>
    </recommendedName>
    <alternativeName>
        <fullName evidence="1">tRNA pseudouridine(55) synthase</fullName>
        <shortName evidence="1">Psi55 synthase</shortName>
    </alternativeName>
    <alternativeName>
        <fullName evidence="1">tRNA pseudouridylate synthase</fullName>
    </alternativeName>
    <alternativeName>
        <fullName evidence="1">tRNA-uridine isomerase</fullName>
    </alternativeName>
</protein>
<accession>Q9Z528</accession>
<organism>
    <name type="scientific">Streptomyces coelicolor (strain ATCC BAA-471 / A3(2) / M145)</name>
    <dbReference type="NCBI Taxonomy" id="100226"/>
    <lineage>
        <taxon>Bacteria</taxon>
        <taxon>Bacillati</taxon>
        <taxon>Actinomycetota</taxon>
        <taxon>Actinomycetes</taxon>
        <taxon>Kitasatosporales</taxon>
        <taxon>Streptomycetaceae</taxon>
        <taxon>Streptomyces</taxon>
        <taxon>Streptomyces albidoflavus group</taxon>
    </lineage>
</organism>
<feature type="chain" id="PRO_0000121913" description="tRNA pseudouridine synthase B">
    <location>
        <begin position="1"/>
        <end position="301"/>
    </location>
</feature>
<feature type="active site" description="Nucleophile" evidence="1">
    <location>
        <position position="45"/>
    </location>
</feature>
<gene>
    <name evidence="1" type="primary">truB</name>
    <name type="ordered locus">SCO5709</name>
    <name type="ORF">SC9F2.07c</name>
</gene>
<sequence length="301" mass="31998">MTEKHTTPDGLVIVDKPSGFTSHDVVAKMRGIARTRRVGHAGTLDPMATGVLVLGVERATKLLGHLALTEKEYLGTIRLGQTTLTDDAEGEITGSRDASKVTWEAIDAGVAELSGDIMQVPSKVSAIKIKGVRSYKRAREGEEFEIPARPVTVSSFAVYDVRDAVADDGTPVLDLVVSVTCSSGTYIRALARDLGAGLGVGGHLTALRRTRVGPYKLDGARTLDQLQQELTVMPVADAAGAAFPRWGVDARRARLLANGVRLEMPEEYTGVGAVAVFDPEGRLLALVEEHKGKAKSLAVFG</sequence>
<reference key="1">
    <citation type="journal article" date="2002" name="Nature">
        <title>Complete genome sequence of the model actinomycete Streptomyces coelicolor A3(2).</title>
        <authorList>
            <person name="Bentley S.D."/>
            <person name="Chater K.F."/>
            <person name="Cerdeno-Tarraga A.-M."/>
            <person name="Challis G.L."/>
            <person name="Thomson N.R."/>
            <person name="James K.D."/>
            <person name="Harris D.E."/>
            <person name="Quail M.A."/>
            <person name="Kieser H."/>
            <person name="Harper D."/>
            <person name="Bateman A."/>
            <person name="Brown S."/>
            <person name="Chandra G."/>
            <person name="Chen C.W."/>
            <person name="Collins M."/>
            <person name="Cronin A."/>
            <person name="Fraser A."/>
            <person name="Goble A."/>
            <person name="Hidalgo J."/>
            <person name="Hornsby T."/>
            <person name="Howarth S."/>
            <person name="Huang C.-H."/>
            <person name="Kieser T."/>
            <person name="Larke L."/>
            <person name="Murphy L.D."/>
            <person name="Oliver K."/>
            <person name="O'Neil S."/>
            <person name="Rabbinowitsch E."/>
            <person name="Rajandream M.A."/>
            <person name="Rutherford K.M."/>
            <person name="Rutter S."/>
            <person name="Seeger K."/>
            <person name="Saunders D."/>
            <person name="Sharp S."/>
            <person name="Squares R."/>
            <person name="Squares S."/>
            <person name="Taylor K."/>
            <person name="Warren T."/>
            <person name="Wietzorrek A."/>
            <person name="Woodward J.R."/>
            <person name="Barrell B.G."/>
            <person name="Parkhill J."/>
            <person name="Hopwood D.A."/>
        </authorList>
    </citation>
    <scope>NUCLEOTIDE SEQUENCE [LARGE SCALE GENOMIC DNA]</scope>
    <source>
        <strain>ATCC BAA-471 / A3(2) / M145</strain>
    </source>
</reference>